<name>QUEC_ECO8A</name>
<comment type="function">
    <text evidence="1">Catalyzes the ATP-dependent conversion of 7-carboxy-7-deazaguanine (CDG) to 7-cyano-7-deazaguanine (preQ(0)).</text>
</comment>
<comment type="catalytic activity">
    <reaction evidence="1">
        <text>7-carboxy-7-deazaguanine + NH4(+) + ATP = 7-cyano-7-deazaguanine + ADP + phosphate + H2O + H(+)</text>
        <dbReference type="Rhea" id="RHEA:27982"/>
        <dbReference type="ChEBI" id="CHEBI:15377"/>
        <dbReference type="ChEBI" id="CHEBI:15378"/>
        <dbReference type="ChEBI" id="CHEBI:28938"/>
        <dbReference type="ChEBI" id="CHEBI:30616"/>
        <dbReference type="ChEBI" id="CHEBI:43474"/>
        <dbReference type="ChEBI" id="CHEBI:45075"/>
        <dbReference type="ChEBI" id="CHEBI:61036"/>
        <dbReference type="ChEBI" id="CHEBI:456216"/>
        <dbReference type="EC" id="6.3.4.20"/>
    </reaction>
</comment>
<comment type="cofactor">
    <cofactor evidence="1">
        <name>Zn(2+)</name>
        <dbReference type="ChEBI" id="CHEBI:29105"/>
    </cofactor>
    <text evidence="1">Binds 1 zinc ion per subunit.</text>
</comment>
<comment type="pathway">
    <text evidence="1">Purine metabolism; 7-cyano-7-deazaguanine biosynthesis.</text>
</comment>
<comment type="similarity">
    <text evidence="1">Belongs to the QueC family.</text>
</comment>
<proteinExistence type="inferred from homology"/>
<gene>
    <name evidence="1" type="primary">queC</name>
    <name type="ordered locus">ECIAI1_0448</name>
</gene>
<protein>
    <recommendedName>
        <fullName evidence="1">7-cyano-7-deazaguanine synthase</fullName>
        <ecNumber evidence="1">6.3.4.20</ecNumber>
    </recommendedName>
    <alternativeName>
        <fullName evidence="1">7-cyano-7-carbaguanine synthase</fullName>
    </alternativeName>
    <alternativeName>
        <fullName evidence="1">PreQ(0) synthase</fullName>
    </alternativeName>
    <alternativeName>
        <fullName evidence="1">Queuosine biosynthesis protein QueC</fullName>
    </alternativeName>
</protein>
<feature type="chain" id="PRO_1000186593" description="7-cyano-7-deazaguanine synthase">
    <location>
        <begin position="1"/>
        <end position="231"/>
    </location>
</feature>
<feature type="binding site" evidence="1">
    <location>
        <begin position="8"/>
        <end position="18"/>
    </location>
    <ligand>
        <name>ATP</name>
        <dbReference type="ChEBI" id="CHEBI:30616"/>
    </ligand>
</feature>
<feature type="binding site" evidence="1">
    <location>
        <position position="188"/>
    </location>
    <ligand>
        <name>Zn(2+)</name>
        <dbReference type="ChEBI" id="CHEBI:29105"/>
    </ligand>
</feature>
<feature type="binding site" evidence="1">
    <location>
        <position position="197"/>
    </location>
    <ligand>
        <name>Zn(2+)</name>
        <dbReference type="ChEBI" id="CHEBI:29105"/>
    </ligand>
</feature>
<feature type="binding site" evidence="1">
    <location>
        <position position="200"/>
    </location>
    <ligand>
        <name>Zn(2+)</name>
        <dbReference type="ChEBI" id="CHEBI:29105"/>
    </ligand>
</feature>
<feature type="binding site" evidence="1">
    <location>
        <position position="203"/>
    </location>
    <ligand>
        <name>Zn(2+)</name>
        <dbReference type="ChEBI" id="CHEBI:29105"/>
    </ligand>
</feature>
<accession>B7M3T7</accession>
<sequence length="231" mass="25510">MKRAVVVFSGGQDSTTCLVQALQQYDEVHCVTFDYGQRHRAEIDVARELALKLGARAHKVLDVTLLNELAVSSLTRDSIPVPDYEPEADGIPNTFVPGRNILFLTLAAIYAYQVKAEAVITGVCETDFSGYPDCRDEFVKALNHAVSLGMAKDIRFETPLMWIDKAETWALADYYGKLDLVRNETLTCYNGIKGDGCSHCAACNLRANGLNHYLADKPTVMAAMKQKTGLR</sequence>
<keyword id="KW-0067">ATP-binding</keyword>
<keyword id="KW-0436">Ligase</keyword>
<keyword id="KW-0479">Metal-binding</keyword>
<keyword id="KW-0547">Nucleotide-binding</keyword>
<keyword id="KW-0671">Queuosine biosynthesis</keyword>
<keyword id="KW-0862">Zinc</keyword>
<organism>
    <name type="scientific">Escherichia coli O8 (strain IAI1)</name>
    <dbReference type="NCBI Taxonomy" id="585034"/>
    <lineage>
        <taxon>Bacteria</taxon>
        <taxon>Pseudomonadati</taxon>
        <taxon>Pseudomonadota</taxon>
        <taxon>Gammaproteobacteria</taxon>
        <taxon>Enterobacterales</taxon>
        <taxon>Enterobacteriaceae</taxon>
        <taxon>Escherichia</taxon>
    </lineage>
</organism>
<dbReference type="EC" id="6.3.4.20" evidence="1"/>
<dbReference type="EMBL" id="CU928160">
    <property type="protein sequence ID" value="CAQ97320.1"/>
    <property type="molecule type" value="Genomic_DNA"/>
</dbReference>
<dbReference type="RefSeq" id="WP_000817236.1">
    <property type="nucleotide sequence ID" value="NC_011741.1"/>
</dbReference>
<dbReference type="SMR" id="B7M3T7"/>
<dbReference type="KEGG" id="ecr:ECIAI1_0448"/>
<dbReference type="HOGENOM" id="CLU_081854_0_0_6"/>
<dbReference type="UniPathway" id="UPA00391"/>
<dbReference type="GO" id="GO:0005524">
    <property type="term" value="F:ATP binding"/>
    <property type="evidence" value="ECO:0007669"/>
    <property type="project" value="UniProtKB-UniRule"/>
</dbReference>
<dbReference type="GO" id="GO:0016879">
    <property type="term" value="F:ligase activity, forming carbon-nitrogen bonds"/>
    <property type="evidence" value="ECO:0007669"/>
    <property type="project" value="UniProtKB-UniRule"/>
</dbReference>
<dbReference type="GO" id="GO:0008270">
    <property type="term" value="F:zinc ion binding"/>
    <property type="evidence" value="ECO:0007669"/>
    <property type="project" value="UniProtKB-UniRule"/>
</dbReference>
<dbReference type="GO" id="GO:0008616">
    <property type="term" value="P:queuosine biosynthetic process"/>
    <property type="evidence" value="ECO:0007669"/>
    <property type="project" value="UniProtKB-UniRule"/>
</dbReference>
<dbReference type="CDD" id="cd01995">
    <property type="entry name" value="QueC-like"/>
    <property type="match status" value="1"/>
</dbReference>
<dbReference type="FunFam" id="3.40.50.620:FF:000017">
    <property type="entry name" value="7-cyano-7-deazaguanine synthase"/>
    <property type="match status" value="1"/>
</dbReference>
<dbReference type="Gene3D" id="3.40.50.620">
    <property type="entry name" value="HUPs"/>
    <property type="match status" value="1"/>
</dbReference>
<dbReference type="HAMAP" id="MF_01633">
    <property type="entry name" value="QueC"/>
    <property type="match status" value="1"/>
</dbReference>
<dbReference type="InterPro" id="IPR018317">
    <property type="entry name" value="QueC"/>
</dbReference>
<dbReference type="InterPro" id="IPR014729">
    <property type="entry name" value="Rossmann-like_a/b/a_fold"/>
</dbReference>
<dbReference type="NCBIfam" id="TIGR00364">
    <property type="entry name" value="7-cyano-7-deazaguanine synthase QueC"/>
    <property type="match status" value="1"/>
</dbReference>
<dbReference type="NCBIfam" id="NF008317">
    <property type="entry name" value="PRK11106.1"/>
    <property type="match status" value="1"/>
</dbReference>
<dbReference type="PANTHER" id="PTHR42914">
    <property type="entry name" value="7-CYANO-7-DEAZAGUANINE SYNTHASE"/>
    <property type="match status" value="1"/>
</dbReference>
<dbReference type="PANTHER" id="PTHR42914:SF1">
    <property type="entry name" value="7-CYANO-7-DEAZAGUANINE SYNTHASE"/>
    <property type="match status" value="1"/>
</dbReference>
<dbReference type="Pfam" id="PF06508">
    <property type="entry name" value="QueC"/>
    <property type="match status" value="1"/>
</dbReference>
<dbReference type="PIRSF" id="PIRSF006293">
    <property type="entry name" value="ExsB"/>
    <property type="match status" value="1"/>
</dbReference>
<dbReference type="SUPFAM" id="SSF52402">
    <property type="entry name" value="Adenine nucleotide alpha hydrolases-like"/>
    <property type="match status" value="1"/>
</dbReference>
<reference key="1">
    <citation type="journal article" date="2009" name="PLoS Genet.">
        <title>Organised genome dynamics in the Escherichia coli species results in highly diverse adaptive paths.</title>
        <authorList>
            <person name="Touchon M."/>
            <person name="Hoede C."/>
            <person name="Tenaillon O."/>
            <person name="Barbe V."/>
            <person name="Baeriswyl S."/>
            <person name="Bidet P."/>
            <person name="Bingen E."/>
            <person name="Bonacorsi S."/>
            <person name="Bouchier C."/>
            <person name="Bouvet O."/>
            <person name="Calteau A."/>
            <person name="Chiapello H."/>
            <person name="Clermont O."/>
            <person name="Cruveiller S."/>
            <person name="Danchin A."/>
            <person name="Diard M."/>
            <person name="Dossat C."/>
            <person name="Karoui M.E."/>
            <person name="Frapy E."/>
            <person name="Garry L."/>
            <person name="Ghigo J.M."/>
            <person name="Gilles A.M."/>
            <person name="Johnson J."/>
            <person name="Le Bouguenec C."/>
            <person name="Lescat M."/>
            <person name="Mangenot S."/>
            <person name="Martinez-Jehanne V."/>
            <person name="Matic I."/>
            <person name="Nassif X."/>
            <person name="Oztas S."/>
            <person name="Petit M.A."/>
            <person name="Pichon C."/>
            <person name="Rouy Z."/>
            <person name="Ruf C.S."/>
            <person name="Schneider D."/>
            <person name="Tourret J."/>
            <person name="Vacherie B."/>
            <person name="Vallenet D."/>
            <person name="Medigue C."/>
            <person name="Rocha E.P.C."/>
            <person name="Denamur E."/>
        </authorList>
    </citation>
    <scope>NUCLEOTIDE SEQUENCE [LARGE SCALE GENOMIC DNA]</scope>
    <source>
        <strain>IAI1</strain>
    </source>
</reference>
<evidence type="ECO:0000255" key="1">
    <source>
        <dbReference type="HAMAP-Rule" id="MF_01633"/>
    </source>
</evidence>